<reference key="1">
    <citation type="journal article" date="2010" name="BMC Genomics">
        <title>Salmo salar and Esox lucius full-length cDNA sequences reveal changes in evolutionary pressures on a post-tetraploidization genome.</title>
        <authorList>
            <person name="Leong J.S."/>
            <person name="Jantzen S.G."/>
            <person name="von Schalburg K.R."/>
            <person name="Cooper G.A."/>
            <person name="Messmer A.M."/>
            <person name="Liao N.Y."/>
            <person name="Munro S."/>
            <person name="Moore R."/>
            <person name="Holt R.A."/>
            <person name="Jones S.J."/>
            <person name="Davidson W.S."/>
            <person name="Koop B.F."/>
        </authorList>
    </citation>
    <scope>NUCLEOTIDE SEQUENCE [LARGE SCALE MRNA]</scope>
    <source>
        <tissue>Brain</tissue>
    </source>
</reference>
<organism>
    <name type="scientific">Salmo salar</name>
    <name type="common">Atlantic salmon</name>
    <dbReference type="NCBI Taxonomy" id="8030"/>
    <lineage>
        <taxon>Eukaryota</taxon>
        <taxon>Metazoa</taxon>
        <taxon>Chordata</taxon>
        <taxon>Craniata</taxon>
        <taxon>Vertebrata</taxon>
        <taxon>Euteleostomi</taxon>
        <taxon>Actinopterygii</taxon>
        <taxon>Neopterygii</taxon>
        <taxon>Teleostei</taxon>
        <taxon>Protacanthopterygii</taxon>
        <taxon>Salmoniformes</taxon>
        <taxon>Salmonidae</taxon>
        <taxon>Salmoninae</taxon>
        <taxon>Salmo</taxon>
    </lineage>
</organism>
<comment type="function">
    <text evidence="1">Catalyzes the reversible transfer of the terminal phosphate group between ATP and AMP. Plays an important role in cellular energy homeostasis and in adenine nucleotide metabolism. Adenylate kinase activity is critical for regulation of the phosphate utilization and the AMP de novo biosynthesis pathways. Plays a key role in hematopoiesis.</text>
</comment>
<comment type="catalytic activity">
    <reaction evidence="1">
        <text>AMP + ATP = 2 ADP</text>
        <dbReference type="Rhea" id="RHEA:12973"/>
        <dbReference type="ChEBI" id="CHEBI:30616"/>
        <dbReference type="ChEBI" id="CHEBI:456215"/>
        <dbReference type="ChEBI" id="CHEBI:456216"/>
        <dbReference type="EC" id="2.7.4.3"/>
    </reaction>
</comment>
<comment type="subunit">
    <text evidence="1">Monomer.</text>
</comment>
<comment type="subcellular location">
    <subcellularLocation>
        <location evidence="1">Mitochondrion intermembrane space</location>
    </subcellularLocation>
</comment>
<comment type="domain">
    <text evidence="1">Consists of three domains, a large central CORE domain and two small peripheral domains, NMPbind and LID, which undergo movements during catalysis. The LID domain closes over the site of phosphoryl transfer upon ATP binding. Assembling and dissambling the active center during each catalytic cycle provides an effective means to prevent ATP hydrolysis.</text>
</comment>
<comment type="similarity">
    <text evidence="1">Belongs to the adenylate kinase family. AK2 subfamily.</text>
</comment>
<keyword id="KW-0067">ATP-binding</keyword>
<keyword id="KW-1015">Disulfide bond</keyword>
<keyword id="KW-0418">Kinase</keyword>
<keyword id="KW-0496">Mitochondrion</keyword>
<keyword id="KW-0547">Nucleotide-binding</keyword>
<keyword id="KW-1185">Reference proteome</keyword>
<keyword id="KW-0808">Transferase</keyword>
<sequence>MAPSTQRNEAVSDVKKGIRAILLGPPGAGKGTQAPRLAEQYCVCHLATGDMLRAMVASGSGLGKRLKETMDAGKLVSDEMVVELIEKNLDTPPCKKGFLLDGFPRTVKQAEMLDDLLEKRTEKLDSVIEFSVDDSLLVRRICGRLIHQPSGRSYHEEFNPPKEPMKDDVTGEPLMRRSDDNASTLRSRLEAYHGQTVPLVKYYSARGLHKAVDAGQSPDVVFASILAAFSSATAATSV</sequence>
<accession>B5XCA1</accession>
<evidence type="ECO:0000255" key="1">
    <source>
        <dbReference type="HAMAP-Rule" id="MF_03168"/>
    </source>
</evidence>
<evidence type="ECO:0000256" key="2">
    <source>
        <dbReference type="SAM" id="MobiDB-lite"/>
    </source>
</evidence>
<gene>
    <name type="primary">ak2</name>
</gene>
<feature type="chain" id="PRO_0000365696" description="Adenylate kinase 2, mitochondrial">
    <location>
        <begin position="1"/>
        <end position="238"/>
    </location>
</feature>
<feature type="region of interest" description="NMP" evidence="1">
    <location>
        <begin position="47"/>
        <end position="76"/>
    </location>
</feature>
<feature type="region of interest" description="LID" evidence="1">
    <location>
        <begin position="143"/>
        <end position="180"/>
    </location>
</feature>
<feature type="region of interest" description="Disordered" evidence="2">
    <location>
        <begin position="152"/>
        <end position="180"/>
    </location>
</feature>
<feature type="compositionally biased region" description="Basic and acidic residues" evidence="2">
    <location>
        <begin position="153"/>
        <end position="180"/>
    </location>
</feature>
<feature type="binding site" evidence="1">
    <location>
        <begin position="27"/>
        <end position="32"/>
    </location>
    <ligand>
        <name>ATP</name>
        <dbReference type="ChEBI" id="CHEBI:30616"/>
    </ligand>
</feature>
<feature type="binding site" evidence="1">
    <location>
        <position position="48"/>
    </location>
    <ligand>
        <name>AMP</name>
        <dbReference type="ChEBI" id="CHEBI:456215"/>
    </ligand>
</feature>
<feature type="binding site" evidence="1">
    <location>
        <position position="53"/>
    </location>
    <ligand>
        <name>AMP</name>
        <dbReference type="ChEBI" id="CHEBI:456215"/>
    </ligand>
</feature>
<feature type="binding site" evidence="1">
    <location>
        <begin position="74"/>
        <end position="76"/>
    </location>
    <ligand>
        <name>AMP</name>
        <dbReference type="ChEBI" id="CHEBI:456215"/>
    </ligand>
</feature>
<feature type="binding site" evidence="1">
    <location>
        <begin position="102"/>
        <end position="105"/>
    </location>
    <ligand>
        <name>AMP</name>
        <dbReference type="ChEBI" id="CHEBI:456215"/>
    </ligand>
</feature>
<feature type="binding site" evidence="1">
    <location>
        <position position="109"/>
    </location>
    <ligand>
        <name>AMP</name>
        <dbReference type="ChEBI" id="CHEBI:456215"/>
    </ligand>
</feature>
<feature type="binding site" evidence="1">
    <location>
        <position position="144"/>
    </location>
    <ligand>
        <name>ATP</name>
        <dbReference type="ChEBI" id="CHEBI:30616"/>
    </ligand>
</feature>
<feature type="binding site" evidence="1">
    <location>
        <begin position="153"/>
        <end position="154"/>
    </location>
    <ligand>
        <name>ATP</name>
        <dbReference type="ChEBI" id="CHEBI:30616"/>
    </ligand>
</feature>
<feature type="binding site" evidence="1">
    <location>
        <position position="177"/>
    </location>
    <ligand>
        <name>AMP</name>
        <dbReference type="ChEBI" id="CHEBI:456215"/>
    </ligand>
</feature>
<feature type="binding site" evidence="1">
    <location>
        <position position="188"/>
    </location>
    <ligand>
        <name>AMP</name>
        <dbReference type="ChEBI" id="CHEBI:456215"/>
    </ligand>
</feature>
<feature type="binding site" evidence="1">
    <location>
        <position position="216"/>
    </location>
    <ligand>
        <name>ATP</name>
        <dbReference type="ChEBI" id="CHEBI:30616"/>
    </ligand>
</feature>
<feature type="disulfide bond" evidence="1">
    <location>
        <begin position="44"/>
        <end position="94"/>
    </location>
</feature>
<name>KAD2_SALSA</name>
<proteinExistence type="evidence at transcript level"/>
<protein>
    <recommendedName>
        <fullName evidence="1">Adenylate kinase 2, mitochondrial</fullName>
        <shortName evidence="1">AK 2</shortName>
        <ecNumber evidence="1">2.7.4.3</ecNumber>
    </recommendedName>
    <alternativeName>
        <fullName evidence="1">ATP-AMP transphosphorylase 2</fullName>
    </alternativeName>
    <alternativeName>
        <fullName evidence="1">ATP:AMP phosphotransferase</fullName>
    </alternativeName>
    <alternativeName>
        <fullName evidence="1">Adenylate monophosphate kinase</fullName>
    </alternativeName>
</protein>
<dbReference type="EC" id="2.7.4.3" evidence="1"/>
<dbReference type="EMBL" id="BT048670">
    <property type="protein sequence ID" value="ACI68471.1"/>
    <property type="molecule type" value="mRNA"/>
</dbReference>
<dbReference type="SMR" id="B5XCA1"/>
<dbReference type="STRING" id="8030.ENSSSAP00000112931"/>
<dbReference type="PaxDb" id="8030-ENSSSAP00000112931"/>
<dbReference type="Ensembl" id="ENSSSAT00070035764">
    <property type="protein sequence ID" value="ENSSSAP00070034077"/>
    <property type="gene ID" value="ENSSSAG00070022407"/>
</dbReference>
<dbReference type="Ensembl" id="ENSSSAT00075032258">
    <property type="protein sequence ID" value="ENSSSAP00075022513"/>
    <property type="gene ID" value="ENSSSAG00075015658"/>
</dbReference>
<dbReference type="GeneID" id="106588465"/>
<dbReference type="KEGG" id="sasa:106588465"/>
<dbReference type="Proteomes" id="UP000087266">
    <property type="component" value="Chromosome ssa27"/>
</dbReference>
<dbReference type="GO" id="GO:0005758">
    <property type="term" value="C:mitochondrial intermembrane space"/>
    <property type="evidence" value="ECO:0007669"/>
    <property type="project" value="UniProtKB-SubCell"/>
</dbReference>
<dbReference type="GO" id="GO:0004017">
    <property type="term" value="F:adenylate kinase activity"/>
    <property type="evidence" value="ECO:0007669"/>
    <property type="project" value="UniProtKB-UniRule"/>
</dbReference>
<dbReference type="GO" id="GO:0005524">
    <property type="term" value="F:ATP binding"/>
    <property type="evidence" value="ECO:0007669"/>
    <property type="project" value="UniProtKB-KW"/>
</dbReference>
<dbReference type="GO" id="GO:0006172">
    <property type="term" value="P:ADP biosynthetic process"/>
    <property type="evidence" value="ECO:0007669"/>
    <property type="project" value="UniProtKB-UniRule"/>
</dbReference>
<dbReference type="GO" id="GO:0046033">
    <property type="term" value="P:AMP metabolic process"/>
    <property type="evidence" value="ECO:0007669"/>
    <property type="project" value="UniProtKB-UniRule"/>
</dbReference>
<dbReference type="GO" id="GO:0046034">
    <property type="term" value="P:ATP metabolic process"/>
    <property type="evidence" value="ECO:0007669"/>
    <property type="project" value="UniProtKB-UniRule"/>
</dbReference>
<dbReference type="CDD" id="cd01428">
    <property type="entry name" value="ADK"/>
    <property type="match status" value="1"/>
</dbReference>
<dbReference type="FunFam" id="3.40.50.300:FF:000106">
    <property type="entry name" value="Adenylate kinase mitochondrial"/>
    <property type="match status" value="1"/>
</dbReference>
<dbReference type="Gene3D" id="3.40.50.300">
    <property type="entry name" value="P-loop containing nucleotide triphosphate hydrolases"/>
    <property type="match status" value="1"/>
</dbReference>
<dbReference type="HAMAP" id="MF_00235">
    <property type="entry name" value="Adenylate_kinase_Adk"/>
    <property type="match status" value="1"/>
</dbReference>
<dbReference type="HAMAP" id="MF_03168">
    <property type="entry name" value="Adenylate_kinase_AK2"/>
    <property type="match status" value="1"/>
</dbReference>
<dbReference type="InterPro" id="IPR006259">
    <property type="entry name" value="Adenyl_kin_sub"/>
</dbReference>
<dbReference type="InterPro" id="IPR000850">
    <property type="entry name" value="Adenylat/UMP-CMP_kin"/>
</dbReference>
<dbReference type="InterPro" id="IPR033690">
    <property type="entry name" value="Adenylat_kinase_CS"/>
</dbReference>
<dbReference type="InterPro" id="IPR007862">
    <property type="entry name" value="Adenylate_kinase_lid-dom"/>
</dbReference>
<dbReference type="InterPro" id="IPR028587">
    <property type="entry name" value="AK2"/>
</dbReference>
<dbReference type="InterPro" id="IPR027417">
    <property type="entry name" value="P-loop_NTPase"/>
</dbReference>
<dbReference type="NCBIfam" id="TIGR01351">
    <property type="entry name" value="adk"/>
    <property type="match status" value="1"/>
</dbReference>
<dbReference type="NCBIfam" id="NF001381">
    <property type="entry name" value="PRK00279.1-3"/>
    <property type="match status" value="1"/>
</dbReference>
<dbReference type="NCBIfam" id="NF011100">
    <property type="entry name" value="PRK14527.1"/>
    <property type="match status" value="1"/>
</dbReference>
<dbReference type="PANTHER" id="PTHR23359">
    <property type="entry name" value="NUCLEOTIDE KINASE"/>
    <property type="match status" value="1"/>
</dbReference>
<dbReference type="Pfam" id="PF00406">
    <property type="entry name" value="ADK"/>
    <property type="match status" value="1"/>
</dbReference>
<dbReference type="Pfam" id="PF05191">
    <property type="entry name" value="ADK_lid"/>
    <property type="match status" value="1"/>
</dbReference>
<dbReference type="PRINTS" id="PR00094">
    <property type="entry name" value="ADENYLTKNASE"/>
</dbReference>
<dbReference type="SUPFAM" id="SSF52540">
    <property type="entry name" value="P-loop containing nucleoside triphosphate hydrolases"/>
    <property type="match status" value="1"/>
</dbReference>
<dbReference type="PROSITE" id="PS00113">
    <property type="entry name" value="ADENYLATE_KINASE"/>
    <property type="match status" value="1"/>
</dbReference>